<reference key="1">
    <citation type="journal article" date="1990" name="Nucleic Acids Res.">
        <title>Aspartyl-tRNA synthetase from Escherichia coli: cloning and characterisation of the gene, homologies of its translated amino acid sequence with asparaginyl- and lysyl-tRNA synthetases.</title>
        <authorList>
            <person name="Eriani G."/>
            <person name="Dirheimer G."/>
            <person name="Gangloff J."/>
        </authorList>
    </citation>
    <scope>NUCLEOTIDE SEQUENCE [GENOMIC DNA]</scope>
    <source>
        <strain>K12</strain>
    </source>
</reference>
<reference key="2">
    <citation type="journal article" date="1996" name="DNA Res.">
        <title>A 460-kb DNA sequence of the Escherichia coli K-12 genome corresponding to the 40.1-50.0 min region on the linkage map.</title>
        <authorList>
            <person name="Itoh T."/>
            <person name="Aiba H."/>
            <person name="Baba T."/>
            <person name="Fujita K."/>
            <person name="Hayashi K."/>
            <person name="Inada T."/>
            <person name="Isono K."/>
            <person name="Kasai H."/>
            <person name="Kimura S."/>
            <person name="Kitakawa M."/>
            <person name="Kitagawa M."/>
            <person name="Makino K."/>
            <person name="Miki T."/>
            <person name="Mizobuchi K."/>
            <person name="Mori H."/>
            <person name="Mori T."/>
            <person name="Motomura K."/>
            <person name="Nakade S."/>
            <person name="Nakamura Y."/>
            <person name="Nashimoto H."/>
            <person name="Nishio Y."/>
            <person name="Oshima T."/>
            <person name="Saito N."/>
            <person name="Sampei G."/>
            <person name="Seki Y."/>
            <person name="Sivasundaram S."/>
            <person name="Tagami H."/>
            <person name="Takeda J."/>
            <person name="Takemoto K."/>
            <person name="Wada C."/>
            <person name="Yamamoto Y."/>
            <person name="Horiuchi T."/>
        </authorList>
    </citation>
    <scope>NUCLEOTIDE SEQUENCE [LARGE SCALE GENOMIC DNA]</scope>
    <source>
        <strain>K12 / W3110 / ATCC 27325 / DSM 5911</strain>
    </source>
</reference>
<reference key="3">
    <citation type="journal article" date="1997" name="Science">
        <title>The complete genome sequence of Escherichia coli K-12.</title>
        <authorList>
            <person name="Blattner F.R."/>
            <person name="Plunkett G. III"/>
            <person name="Bloch C.A."/>
            <person name="Perna N.T."/>
            <person name="Burland V."/>
            <person name="Riley M."/>
            <person name="Collado-Vides J."/>
            <person name="Glasner J.D."/>
            <person name="Rode C.K."/>
            <person name="Mayhew G.F."/>
            <person name="Gregor J."/>
            <person name="Davis N.W."/>
            <person name="Kirkpatrick H.A."/>
            <person name="Goeden M.A."/>
            <person name="Rose D.J."/>
            <person name="Mau B."/>
            <person name="Shao Y."/>
        </authorList>
    </citation>
    <scope>NUCLEOTIDE SEQUENCE [LARGE SCALE GENOMIC DNA]</scope>
    <source>
        <strain>K12 / MG1655 / ATCC 47076</strain>
    </source>
</reference>
<reference key="4">
    <citation type="journal article" date="2006" name="Mol. Syst. Biol.">
        <title>Highly accurate genome sequences of Escherichia coli K-12 strains MG1655 and W3110.</title>
        <authorList>
            <person name="Hayashi K."/>
            <person name="Morooka N."/>
            <person name="Yamamoto Y."/>
            <person name="Fujita K."/>
            <person name="Isono K."/>
            <person name="Choi S."/>
            <person name="Ohtsubo E."/>
            <person name="Baba T."/>
            <person name="Wanner B.L."/>
            <person name="Mori H."/>
            <person name="Horiuchi T."/>
        </authorList>
    </citation>
    <scope>NUCLEOTIDE SEQUENCE [LARGE SCALE GENOMIC DNA]</scope>
    <source>
        <strain>K12 / W3110 / ATCC 27325 / DSM 5911</strain>
    </source>
</reference>
<reference key="5">
    <citation type="journal article" date="1991" name="Mutat. Res.">
        <title>Location of a mutation in the aspartyl-tRNA synthetase gene of Escherichia coli K12.</title>
        <authorList>
            <person name="Sharples G.J."/>
            <person name="Lloyd R.G."/>
        </authorList>
    </citation>
    <scope>NUCLEOTIDE SEQUENCE [GENOMIC DNA] OF 382-590</scope>
    <source>
        <strain>K12</strain>
    </source>
</reference>
<reference key="6">
    <citation type="journal article" date="1991" name="J. Bacteriol.">
        <title>Molecular analysis of the Escherichia coli ruvC gene, which encodes a Holliday junction-specific endonuclease.</title>
        <authorList>
            <person name="Takahagi M."/>
            <person name="Iwasaki H."/>
            <person name="Nakata A."/>
            <person name="Shinagawa H."/>
        </authorList>
    </citation>
    <scope>NUCLEOTIDE SEQUENCE [GENOMIC DNA] OF 461-590</scope>
</reference>
<reference key="7">
    <citation type="journal article" date="1997" name="Electrophoresis">
        <title>Escherichia coli proteome analysis using the gene-protein database.</title>
        <authorList>
            <person name="VanBogelen R.A."/>
            <person name="Abshire K.Z."/>
            <person name="Moldover B."/>
            <person name="Olson E.R."/>
            <person name="Neidhardt F.C."/>
        </authorList>
    </citation>
    <scope>IDENTIFICATION BY 2D-GEL</scope>
</reference>
<reference key="8">
    <citation type="journal article" date="2000" name="J. Biol. Chem.">
        <title>Metabolism of D-aminoacyl-tRNAs in Escherichia coli and Saccharomyces cerevisiae cells.</title>
        <authorList>
            <person name="Soutourina J."/>
            <person name="Plateau P."/>
            <person name="Blanquet S."/>
        </authorList>
    </citation>
    <scope>FUNCTION</scope>
    <scope>CATALYTIC ACTIVITY</scope>
    <scope>SUBSTRATE SPECIFICITY</scope>
    <source>
        <strain>K12 / K37</strain>
    </source>
</reference>
<reference key="9">
    <citation type="journal article" date="1999" name="EMBO J.">
        <title>Synthesis of aspartyl-tRNA(Asp) in Escherichia coli - a snapshot of the second step.</title>
        <authorList>
            <person name="Eiler S."/>
            <person name="Dock-Bregeon A.-C."/>
            <person name="Moulinier L."/>
            <person name="Thierry J.-C."/>
            <person name="Moras D."/>
        </authorList>
    </citation>
    <scope>X-RAY CRYSTALLOGRAPHY (2.4 ANGSTROMS)</scope>
</reference>
<reference key="10">
    <citation type="journal article" date="2000" name="J. Mol. Biol.">
        <title>Aspartyl tRNA-synthetase from Escherichia coli: flexibility and adaptability to the substrates.</title>
        <authorList>
            <person name="Rees B."/>
            <person name="Webster G."/>
            <person name="Delarue M."/>
            <person name="Boeglin M."/>
            <person name="Moras D."/>
        </authorList>
    </citation>
    <scope>X-RAY CRYSTALLOGRAPHY (2.7 ANGSTROMS)</scope>
</reference>
<comment type="function">
    <text evidence="1 2">Catalyzes the attachment of L-aspartate to tRNA(Asp) in a two-step reaction: L-aspartate is first activated by ATP to form Asp-AMP and then transferred to the acceptor end of tRNA(Asp). Also mischarges tRNA(Asp) with D-aspartate, although it is a poor substrate (PubMed:10918062).</text>
</comment>
<comment type="catalytic activity">
    <reaction evidence="1 2">
        <text>tRNA(Asp) + L-aspartate + ATP = L-aspartyl-tRNA(Asp) + AMP + diphosphate</text>
        <dbReference type="Rhea" id="RHEA:19649"/>
        <dbReference type="Rhea" id="RHEA-COMP:9660"/>
        <dbReference type="Rhea" id="RHEA-COMP:9678"/>
        <dbReference type="ChEBI" id="CHEBI:29991"/>
        <dbReference type="ChEBI" id="CHEBI:30616"/>
        <dbReference type="ChEBI" id="CHEBI:33019"/>
        <dbReference type="ChEBI" id="CHEBI:78442"/>
        <dbReference type="ChEBI" id="CHEBI:78516"/>
        <dbReference type="ChEBI" id="CHEBI:456215"/>
        <dbReference type="EC" id="6.1.1.12"/>
    </reaction>
</comment>
<comment type="subunit">
    <text>Homodimer.</text>
</comment>
<comment type="subcellular location">
    <subcellularLocation>
        <location>Cytoplasm</location>
    </subcellularLocation>
</comment>
<comment type="similarity">
    <text evidence="1">Belongs to the class-II aminoacyl-tRNA synthetase family. Type 1 subfamily.</text>
</comment>
<feature type="chain" id="PRO_0000110868" description="Aspartate--tRNA ligase">
    <location>
        <begin position="1"/>
        <end position="590"/>
    </location>
</feature>
<feature type="region of interest" description="Aspartate" evidence="1">
    <location>
        <begin position="195"/>
        <end position="198"/>
    </location>
</feature>
<feature type="binding site" evidence="1">
    <location>
        <position position="171"/>
    </location>
    <ligand>
        <name>L-aspartate</name>
        <dbReference type="ChEBI" id="CHEBI:29991"/>
    </ligand>
</feature>
<feature type="binding site" evidence="1">
    <location>
        <begin position="217"/>
        <end position="219"/>
    </location>
    <ligand>
        <name>ATP</name>
        <dbReference type="ChEBI" id="CHEBI:30616"/>
    </ligand>
</feature>
<feature type="binding site" evidence="1">
    <location>
        <position position="217"/>
    </location>
    <ligand>
        <name>L-aspartate</name>
        <dbReference type="ChEBI" id="CHEBI:29991"/>
    </ligand>
</feature>
<feature type="binding site" evidence="1">
    <location>
        <position position="226"/>
    </location>
    <ligand>
        <name>ATP</name>
        <dbReference type="ChEBI" id="CHEBI:30616"/>
    </ligand>
</feature>
<feature type="binding site" evidence="1">
    <location>
        <position position="448"/>
    </location>
    <ligand>
        <name>L-aspartate</name>
        <dbReference type="ChEBI" id="CHEBI:29991"/>
    </ligand>
</feature>
<feature type="binding site" evidence="1">
    <location>
        <position position="482"/>
    </location>
    <ligand>
        <name>ATP</name>
        <dbReference type="ChEBI" id="CHEBI:30616"/>
    </ligand>
</feature>
<feature type="binding site" evidence="1">
    <location>
        <position position="489"/>
    </location>
    <ligand>
        <name>L-aspartate</name>
        <dbReference type="ChEBI" id="CHEBI:29991"/>
    </ligand>
</feature>
<feature type="binding site" evidence="1">
    <location>
        <begin position="534"/>
        <end position="537"/>
    </location>
    <ligand>
        <name>ATP</name>
        <dbReference type="ChEBI" id="CHEBI:30616"/>
    </ligand>
</feature>
<feature type="helix" evidence="3">
    <location>
        <begin position="6"/>
        <end position="8"/>
    </location>
</feature>
<feature type="helix" evidence="3">
    <location>
        <begin position="11"/>
        <end position="13"/>
    </location>
</feature>
<feature type="strand" evidence="3">
    <location>
        <begin position="17"/>
        <end position="29"/>
    </location>
</feature>
<feature type="strand" evidence="3">
    <location>
        <begin position="34"/>
        <end position="40"/>
    </location>
</feature>
<feature type="strand" evidence="3">
    <location>
        <begin position="43"/>
        <end position="49"/>
    </location>
</feature>
<feature type="helix" evidence="3">
    <location>
        <begin position="51"/>
        <end position="53"/>
    </location>
</feature>
<feature type="helix" evidence="3">
    <location>
        <begin position="54"/>
        <end position="60"/>
    </location>
</feature>
<feature type="strand" evidence="3">
    <location>
        <begin position="68"/>
        <end position="77"/>
    </location>
</feature>
<feature type="turn" evidence="3">
    <location>
        <begin position="80"/>
        <end position="82"/>
    </location>
</feature>
<feature type="turn" evidence="3">
    <location>
        <begin position="88"/>
        <end position="91"/>
    </location>
</feature>
<feature type="strand" evidence="3">
    <location>
        <begin position="92"/>
        <end position="103"/>
    </location>
</feature>
<feature type="strand" evidence="4">
    <location>
        <begin position="112"/>
        <end position="114"/>
    </location>
</feature>
<feature type="helix" evidence="3">
    <location>
        <begin position="118"/>
        <end position="123"/>
    </location>
</feature>
<feature type="helix" evidence="3">
    <location>
        <begin position="125"/>
        <end position="128"/>
    </location>
</feature>
<feature type="helix" evidence="3">
    <location>
        <begin position="132"/>
        <end position="154"/>
    </location>
</feature>
<feature type="strand" evidence="3">
    <location>
        <begin position="164"/>
        <end position="166"/>
    </location>
</feature>
<feature type="strand" evidence="3">
    <location>
        <begin position="170"/>
        <end position="173"/>
    </location>
</feature>
<feature type="strand" evidence="3">
    <location>
        <begin position="177"/>
        <end position="179"/>
    </location>
</feature>
<feature type="strand" evidence="3">
    <location>
        <begin position="181"/>
        <end position="183"/>
    </location>
</feature>
<feature type="strand" evidence="3">
    <location>
        <begin position="187"/>
        <end position="189"/>
    </location>
</feature>
<feature type="helix" evidence="3">
    <location>
        <begin position="195"/>
        <end position="203"/>
    </location>
</feature>
<feature type="strand" evidence="3">
    <location>
        <begin position="208"/>
        <end position="216"/>
    </location>
</feature>
<feature type="strand" evidence="3">
    <location>
        <begin position="227"/>
        <end position="238"/>
    </location>
</feature>
<feature type="helix" evidence="3">
    <location>
        <begin position="241"/>
        <end position="260"/>
    </location>
</feature>
<feature type="strand" evidence="3">
    <location>
        <begin position="269"/>
        <end position="271"/>
    </location>
</feature>
<feature type="helix" evidence="3">
    <location>
        <begin position="272"/>
        <end position="279"/>
    </location>
</feature>
<feature type="strand" evidence="4">
    <location>
        <begin position="280"/>
        <end position="283"/>
    </location>
</feature>
<feature type="strand" evidence="3">
    <location>
        <begin position="292"/>
        <end position="294"/>
    </location>
</feature>
<feature type="helix" evidence="3">
    <location>
        <begin position="296"/>
        <end position="299"/>
    </location>
</feature>
<feature type="helix" evidence="3">
    <location>
        <begin position="305"/>
        <end position="312"/>
    </location>
</feature>
<feature type="strand" evidence="3">
    <location>
        <begin position="316"/>
        <end position="323"/>
    </location>
</feature>
<feature type="helix" evidence="3">
    <location>
        <begin position="326"/>
        <end position="328"/>
    </location>
</feature>
<feature type="helix" evidence="3">
    <location>
        <begin position="331"/>
        <end position="343"/>
    </location>
</feature>
<feature type="strand" evidence="3">
    <location>
        <begin position="351"/>
        <end position="355"/>
    </location>
</feature>
<feature type="helix" evidence="3">
    <location>
        <begin position="357"/>
        <end position="363"/>
    </location>
</feature>
<feature type="helix" evidence="3">
    <location>
        <begin position="369"/>
        <end position="371"/>
    </location>
</feature>
<feature type="helix" evidence="3">
    <location>
        <begin position="374"/>
        <end position="383"/>
    </location>
</feature>
<feature type="strand" evidence="3">
    <location>
        <begin position="391"/>
        <end position="398"/>
    </location>
</feature>
<feature type="helix" evidence="3">
    <location>
        <begin position="399"/>
        <end position="416"/>
    </location>
</feature>
<feature type="strand" evidence="3">
    <location>
        <begin position="427"/>
        <end position="431"/>
    </location>
</feature>
<feature type="strand" evidence="3">
    <location>
        <begin position="434"/>
        <end position="438"/>
    </location>
</feature>
<feature type="strand" evidence="3">
    <location>
        <begin position="440"/>
        <end position="442"/>
    </location>
</feature>
<feature type="strand" evidence="3">
    <location>
        <begin position="444"/>
        <end position="448"/>
    </location>
</feature>
<feature type="strand" evidence="3">
    <location>
        <begin position="454"/>
        <end position="456"/>
    </location>
</feature>
<feature type="helix" evidence="3">
    <location>
        <begin position="459"/>
        <end position="464"/>
    </location>
</feature>
<feature type="turn" evidence="5">
    <location>
        <begin position="466"/>
        <end position="468"/>
    </location>
</feature>
<feature type="strand" evidence="3">
    <location>
        <begin position="470"/>
        <end position="478"/>
    </location>
</feature>
<feature type="strand" evidence="3">
    <location>
        <begin position="481"/>
        <end position="489"/>
    </location>
</feature>
<feature type="helix" evidence="3">
    <location>
        <begin position="493"/>
        <end position="502"/>
    </location>
</feature>
<feature type="helix" evidence="3">
    <location>
        <begin position="507"/>
        <end position="520"/>
    </location>
</feature>
<feature type="turn" evidence="3">
    <location>
        <begin position="521"/>
        <end position="524"/>
    </location>
</feature>
<feature type="strand" evidence="3">
    <location>
        <begin position="528"/>
        <end position="534"/>
    </location>
</feature>
<feature type="helix" evidence="3">
    <location>
        <begin position="535"/>
        <end position="543"/>
    </location>
</feature>
<feature type="helix" evidence="3">
    <location>
        <begin position="548"/>
        <end position="551"/>
    </location>
</feature>
<feature type="strand" evidence="3">
    <location>
        <begin position="552"/>
        <end position="554"/>
    </location>
</feature>
<feature type="turn" evidence="3">
    <location>
        <begin position="563"/>
        <end position="566"/>
    </location>
</feature>
<feature type="strand" evidence="5">
    <location>
        <begin position="567"/>
        <end position="570"/>
    </location>
</feature>
<feature type="helix" evidence="3">
    <location>
        <begin position="573"/>
        <end position="578"/>
    </location>
</feature>
<feature type="strand" evidence="5">
    <location>
        <begin position="581"/>
        <end position="583"/>
    </location>
</feature>
<feature type="strand" evidence="4">
    <location>
        <begin position="586"/>
        <end position="588"/>
    </location>
</feature>
<dbReference type="EC" id="6.1.1.12" evidence="1 2"/>
<dbReference type="EMBL" id="X53863">
    <property type="protein sequence ID" value="CAA37856.1"/>
    <property type="molecule type" value="Genomic_DNA"/>
</dbReference>
<dbReference type="EMBL" id="U00096">
    <property type="protein sequence ID" value="AAC74936.1"/>
    <property type="molecule type" value="Genomic_DNA"/>
</dbReference>
<dbReference type="EMBL" id="AP009048">
    <property type="protein sequence ID" value="BAA15677.1"/>
    <property type="molecule type" value="Genomic_DNA"/>
</dbReference>
<dbReference type="EMBL" id="X53984">
    <property type="protein sequence ID" value="CAA37932.1"/>
    <property type="molecule type" value="Genomic_DNA"/>
</dbReference>
<dbReference type="EMBL" id="D10165">
    <property type="status" value="NOT_ANNOTATED_CDS"/>
    <property type="molecule type" value="Genomic_DNA"/>
</dbReference>
<dbReference type="PIR" id="JT0942">
    <property type="entry name" value="SYECD"/>
</dbReference>
<dbReference type="RefSeq" id="NP_416380.1">
    <property type="nucleotide sequence ID" value="NC_000913.3"/>
</dbReference>
<dbReference type="RefSeq" id="WP_001258678.1">
    <property type="nucleotide sequence ID" value="NZ_SSZK01000001.1"/>
</dbReference>
<dbReference type="PDB" id="1C0A">
    <property type="method" value="X-ray"/>
    <property type="resolution" value="2.40 A"/>
    <property type="chains" value="A=1-585"/>
</dbReference>
<dbReference type="PDB" id="1EQR">
    <property type="method" value="X-ray"/>
    <property type="resolution" value="2.70 A"/>
    <property type="chains" value="A/B/C=1-590"/>
</dbReference>
<dbReference type="PDB" id="1IL2">
    <property type="method" value="X-ray"/>
    <property type="resolution" value="2.60 A"/>
    <property type="chains" value="A/B=1-590"/>
</dbReference>
<dbReference type="PDBsum" id="1C0A"/>
<dbReference type="PDBsum" id="1EQR"/>
<dbReference type="PDBsum" id="1IL2"/>
<dbReference type="SMR" id="P21889"/>
<dbReference type="BioGRID" id="4259330">
    <property type="interactions" value="54"/>
</dbReference>
<dbReference type="DIP" id="DIP-9182N"/>
<dbReference type="FunCoup" id="P21889">
    <property type="interactions" value="883"/>
</dbReference>
<dbReference type="IntAct" id="P21889">
    <property type="interactions" value="27"/>
</dbReference>
<dbReference type="STRING" id="511145.b1866"/>
<dbReference type="BindingDB" id="P21889"/>
<dbReference type="ChEMBL" id="CHEMBL4295574"/>
<dbReference type="jPOST" id="P21889"/>
<dbReference type="PaxDb" id="511145-b1866"/>
<dbReference type="EnsemblBacteria" id="AAC74936">
    <property type="protein sequence ID" value="AAC74936"/>
    <property type="gene ID" value="b1866"/>
</dbReference>
<dbReference type="GeneID" id="946385"/>
<dbReference type="KEGG" id="ecj:JW1855"/>
<dbReference type="KEGG" id="eco:b1866"/>
<dbReference type="KEGG" id="ecoc:C3026_10625"/>
<dbReference type="PATRIC" id="fig|1411691.4.peg.382"/>
<dbReference type="EchoBASE" id="EB0095"/>
<dbReference type="eggNOG" id="COG0173">
    <property type="taxonomic scope" value="Bacteria"/>
</dbReference>
<dbReference type="HOGENOM" id="CLU_014330_3_2_6"/>
<dbReference type="InParanoid" id="P21889"/>
<dbReference type="OMA" id="LCGWVDR"/>
<dbReference type="OrthoDB" id="9802326at2"/>
<dbReference type="PhylomeDB" id="P21889"/>
<dbReference type="BioCyc" id="EcoCyc:ASPS-MONOMER"/>
<dbReference type="BioCyc" id="MetaCyc:ASPS-MONOMER"/>
<dbReference type="BRENDA" id="6.1.1.12">
    <property type="organism ID" value="2026"/>
</dbReference>
<dbReference type="SABIO-RK" id="P21889"/>
<dbReference type="EvolutionaryTrace" id="P21889"/>
<dbReference type="PRO" id="PR:P21889"/>
<dbReference type="Proteomes" id="UP000000625">
    <property type="component" value="Chromosome"/>
</dbReference>
<dbReference type="GO" id="GO:0005829">
    <property type="term" value="C:cytosol"/>
    <property type="evidence" value="ECO:0000314"/>
    <property type="project" value="EcoCyc"/>
</dbReference>
<dbReference type="GO" id="GO:0004815">
    <property type="term" value="F:aspartate-tRNA ligase activity"/>
    <property type="evidence" value="ECO:0000314"/>
    <property type="project" value="EcoCyc"/>
</dbReference>
<dbReference type="GO" id="GO:0005524">
    <property type="term" value="F:ATP binding"/>
    <property type="evidence" value="ECO:0007669"/>
    <property type="project" value="UniProtKB-UniRule"/>
</dbReference>
<dbReference type="GO" id="GO:0003676">
    <property type="term" value="F:nucleic acid binding"/>
    <property type="evidence" value="ECO:0007669"/>
    <property type="project" value="InterPro"/>
</dbReference>
<dbReference type="GO" id="GO:0006422">
    <property type="term" value="P:aspartyl-tRNA aminoacylation"/>
    <property type="evidence" value="ECO:0000314"/>
    <property type="project" value="EcoCyc"/>
</dbReference>
<dbReference type="CDD" id="cd00777">
    <property type="entry name" value="AspRS_core"/>
    <property type="match status" value="1"/>
</dbReference>
<dbReference type="CDD" id="cd04317">
    <property type="entry name" value="EcAspRS_like_N"/>
    <property type="match status" value="1"/>
</dbReference>
<dbReference type="FunFam" id="2.40.50.140:FF:000080">
    <property type="entry name" value="Aspartate--tRNA ligase"/>
    <property type="match status" value="1"/>
</dbReference>
<dbReference type="FunFam" id="3.30.1360.30:FF:000001">
    <property type="entry name" value="Aspartate--tRNA ligase"/>
    <property type="match status" value="1"/>
</dbReference>
<dbReference type="Gene3D" id="3.30.930.10">
    <property type="entry name" value="Bira Bifunctional Protein, Domain 2"/>
    <property type="match status" value="1"/>
</dbReference>
<dbReference type="Gene3D" id="3.30.1360.30">
    <property type="entry name" value="GAD-like domain"/>
    <property type="match status" value="1"/>
</dbReference>
<dbReference type="Gene3D" id="2.40.50.140">
    <property type="entry name" value="Nucleic acid-binding proteins"/>
    <property type="match status" value="1"/>
</dbReference>
<dbReference type="HAMAP" id="MF_00044">
    <property type="entry name" value="Asp_tRNA_synth_type1"/>
    <property type="match status" value="1"/>
</dbReference>
<dbReference type="InterPro" id="IPR004364">
    <property type="entry name" value="Aa-tRNA-synt_II"/>
</dbReference>
<dbReference type="InterPro" id="IPR006195">
    <property type="entry name" value="aa-tRNA-synth_II"/>
</dbReference>
<dbReference type="InterPro" id="IPR045864">
    <property type="entry name" value="aa-tRNA-synth_II/BPL/LPL"/>
</dbReference>
<dbReference type="InterPro" id="IPR004524">
    <property type="entry name" value="Asp-tRNA-ligase_1"/>
</dbReference>
<dbReference type="InterPro" id="IPR047089">
    <property type="entry name" value="Asp-tRNA-ligase_1_N"/>
</dbReference>
<dbReference type="InterPro" id="IPR002312">
    <property type="entry name" value="Asp/Asn-tRNA-synth_IIb"/>
</dbReference>
<dbReference type="InterPro" id="IPR047090">
    <property type="entry name" value="AspRS_core"/>
</dbReference>
<dbReference type="InterPro" id="IPR004115">
    <property type="entry name" value="GAD-like_sf"/>
</dbReference>
<dbReference type="InterPro" id="IPR029351">
    <property type="entry name" value="GAD_dom"/>
</dbReference>
<dbReference type="InterPro" id="IPR012340">
    <property type="entry name" value="NA-bd_OB-fold"/>
</dbReference>
<dbReference type="InterPro" id="IPR004365">
    <property type="entry name" value="NA-bd_OB_tRNA"/>
</dbReference>
<dbReference type="NCBIfam" id="TIGR00459">
    <property type="entry name" value="aspS_bact"/>
    <property type="match status" value="1"/>
</dbReference>
<dbReference type="NCBIfam" id="NF001750">
    <property type="entry name" value="PRK00476.1"/>
    <property type="match status" value="1"/>
</dbReference>
<dbReference type="PANTHER" id="PTHR22594:SF5">
    <property type="entry name" value="ASPARTATE--TRNA LIGASE, MITOCHONDRIAL"/>
    <property type="match status" value="1"/>
</dbReference>
<dbReference type="PANTHER" id="PTHR22594">
    <property type="entry name" value="ASPARTYL/LYSYL-TRNA SYNTHETASE"/>
    <property type="match status" value="1"/>
</dbReference>
<dbReference type="Pfam" id="PF02938">
    <property type="entry name" value="GAD"/>
    <property type="match status" value="1"/>
</dbReference>
<dbReference type="Pfam" id="PF00152">
    <property type="entry name" value="tRNA-synt_2"/>
    <property type="match status" value="1"/>
</dbReference>
<dbReference type="Pfam" id="PF01336">
    <property type="entry name" value="tRNA_anti-codon"/>
    <property type="match status" value="1"/>
</dbReference>
<dbReference type="PRINTS" id="PR01042">
    <property type="entry name" value="TRNASYNTHASP"/>
</dbReference>
<dbReference type="SUPFAM" id="SSF55681">
    <property type="entry name" value="Class II aaRS and biotin synthetases"/>
    <property type="match status" value="1"/>
</dbReference>
<dbReference type="SUPFAM" id="SSF55261">
    <property type="entry name" value="GAD domain-like"/>
    <property type="match status" value="1"/>
</dbReference>
<dbReference type="SUPFAM" id="SSF50249">
    <property type="entry name" value="Nucleic acid-binding proteins"/>
    <property type="match status" value="1"/>
</dbReference>
<dbReference type="PROSITE" id="PS50862">
    <property type="entry name" value="AA_TRNA_LIGASE_II"/>
    <property type="match status" value="1"/>
</dbReference>
<evidence type="ECO:0000255" key="1">
    <source>
        <dbReference type="HAMAP-Rule" id="MF_00044"/>
    </source>
</evidence>
<evidence type="ECO:0000269" key="2">
    <source>
    </source>
</evidence>
<evidence type="ECO:0007829" key="3">
    <source>
        <dbReference type="PDB" id="1C0A"/>
    </source>
</evidence>
<evidence type="ECO:0007829" key="4">
    <source>
        <dbReference type="PDB" id="1EQR"/>
    </source>
</evidence>
<evidence type="ECO:0007829" key="5">
    <source>
        <dbReference type="PDB" id="1IL2"/>
    </source>
</evidence>
<keyword id="KW-0002">3D-structure</keyword>
<keyword id="KW-0030">Aminoacyl-tRNA synthetase</keyword>
<keyword id="KW-0067">ATP-binding</keyword>
<keyword id="KW-0963">Cytoplasm</keyword>
<keyword id="KW-0436">Ligase</keyword>
<keyword id="KW-0547">Nucleotide-binding</keyword>
<keyword id="KW-0648">Protein biosynthesis</keyword>
<keyword id="KW-1185">Reference proteome</keyword>
<sequence length="590" mass="65913">MRTEYCGQLRLSHVGQQVTLCGWVNRRRDLGSLIFIDMRDREGIVQVFFDPDRADALKLASELRNEFCIQVTGTVRARDEKNINRDMATGEIEVLASSLTIINRADVLPLDSNHVNTEEARLKYRYLDLRRPEMAQRLKTRAKITSLVRRFMDDHGFLDIETPMLTKATPEGARDYLVPSRVHKGKFYALPQSPQLFKQLLMMSGFDRYYQIVKCFRDEDLRADRQPEFTQIDVETSFMTAPQVREVMEALVRHLWLEVKGVDLGDFPVMTFAEAERRYGSDKPDLRNPMELTDVADLLKSVEFAVFAGPANDPKGRVAALRVPGGASLTRKQIDEYGNFVKIYGAKGLAYIKVNERAKGLEGINSPVAKFLNAEIIEDILDRTAAQDGDMIFFGADNKKIVADAMGALRLKVGKDLGLTDESKWAPLWVIDFPMFEDDGEGGLTAMHHPFTSPKDMTAAELKAAPENAVANAYDMVINGYEVGGGSVRIHNGDMQQTVFGILGINEEEQREKFGFLLDALKYGTPPHAGLAFGLDRLTMLLTGTDNIRDVIAFPKTTAAACLMTEAPSFANPTALAELSIQVVKKAENN</sequence>
<gene>
    <name evidence="1" type="primary">aspS</name>
    <name type="synonym">tls</name>
    <name type="ordered locus">b1866</name>
    <name type="ordered locus">JW1855</name>
</gene>
<organism>
    <name type="scientific">Escherichia coli (strain K12)</name>
    <dbReference type="NCBI Taxonomy" id="83333"/>
    <lineage>
        <taxon>Bacteria</taxon>
        <taxon>Pseudomonadati</taxon>
        <taxon>Pseudomonadota</taxon>
        <taxon>Gammaproteobacteria</taxon>
        <taxon>Enterobacterales</taxon>
        <taxon>Enterobacteriaceae</taxon>
        <taxon>Escherichia</taxon>
    </lineage>
</organism>
<name>SYD_ECOLI</name>
<accession>P21889</accession>
<proteinExistence type="evidence at protein level"/>
<protein>
    <recommendedName>
        <fullName evidence="1">Aspartate--tRNA ligase</fullName>
        <ecNumber evidence="1 2">6.1.1.12</ecNumber>
    </recommendedName>
    <alternativeName>
        <fullName evidence="1">Aspartyl-tRNA synthetase</fullName>
        <shortName evidence="1">AspRS</shortName>
    </alternativeName>
</protein>